<organism>
    <name type="scientific">Alternaria alternata</name>
    <name type="common">Alternaria rot fungus</name>
    <name type="synonym">Torula alternata</name>
    <dbReference type="NCBI Taxonomy" id="5599"/>
    <lineage>
        <taxon>Eukaryota</taxon>
        <taxon>Fungi</taxon>
        <taxon>Dikarya</taxon>
        <taxon>Ascomycota</taxon>
        <taxon>Pezizomycotina</taxon>
        <taxon>Dothideomycetes</taxon>
        <taxon>Pleosporomycetidae</taxon>
        <taxon>Pleosporales</taxon>
        <taxon>Pleosporineae</taxon>
        <taxon>Pleosporaceae</taxon>
        <taxon>Alternaria</taxon>
        <taxon>Alternaria sect. Alternaria</taxon>
        <taxon>Alternaria alternata complex</taxon>
    </lineage>
</organism>
<protein>
    <recommendedName>
        <fullName>Allergen Alt a 2</fullName>
    </recommendedName>
    <allergenName>Alt a 2</allergenName>
</protein>
<evidence type="ECO:0000269" key="1">
    <source>
    </source>
</evidence>
<evidence type="ECO:0000305" key="2">
    <source>
    </source>
</evidence>
<evidence type="ECO:0000305" key="3">
    <source>
    </source>
</evidence>
<gene>
    <name type="primary">ALTA2</name>
</gene>
<dbReference type="EMBL" id="U62442">
    <property type="protein sequence ID" value="AAD00097.1"/>
    <property type="molecule type" value="mRNA"/>
</dbReference>
<dbReference type="Allergome" id="16">
    <property type="allergen name" value="Alt a 2"/>
</dbReference>
<dbReference type="NCBIfam" id="NF047389">
    <property type="entry name" value="ATPase_Sll1717"/>
    <property type="match status" value="1"/>
</dbReference>
<sequence length="190" mass="22387">MHSSNNFFKDNIFRSLSKEDPDYSRNIEGQVIRLHWDWAQLLMLSAKRMKVAFKLDIEKDQRVWDRCTADDLKGRNGFKRCLQFTLYRPRDLLSLLNEAFFSAFRENRETIINTDLEYAAKSISMARLEDLWKEYQKIFPSIQVITSAFRSIEPELTVYTCLKKIEASFELIEENGDPKITSEIQLLKAS</sequence>
<reference key="1">
    <citation type="journal article" date="1999" name="J. Allergy Clin. Immunol.">
        <title>Molecular cloning of a major Alternaria alternata allergen, rAlt a 2.</title>
        <authorList>
            <person name="Bush R.K."/>
            <person name="Sanchez H."/>
            <person name="Geisler D."/>
        </authorList>
    </citation>
    <scope>NUCLEOTIDE SEQUENCE [MRNA]</scope>
    <scope>IGE-BINDING</scope>
    <source>
        <strain>ATCC 46582 / PD 1</strain>
    </source>
</reference>
<reference key="2">
    <citation type="journal article" date="2005" name="J. Allergy Clin. Immunol.">
        <title>Diagnosis of Alternaria alternata sensitization with natural and recombinant Alt a 1 allergens.</title>
        <authorList>
            <person name="Asturias J.A."/>
            <person name="Ibarrola I."/>
            <person name="Ferrer A."/>
            <person name="Andreu C."/>
            <person name="Lopez-Pascual E."/>
            <person name="Quiralte J."/>
            <person name="Florido F."/>
            <person name="Martinez A."/>
        </authorList>
    </citation>
    <scope>ALLERGEN</scope>
</reference>
<accession>O94095</accession>
<feature type="chain" id="PRO_0000345087" description="Allergen Alt a 2">
    <location>
        <begin position="1"/>
        <end position="190"/>
    </location>
</feature>
<comment type="allergen">
    <text evidence="1">Causes an allergic reaction in human. Binds to IgE.</text>
</comment>
<comment type="caution">
    <text evidence="2 3">Was originally (PubMed:10482844) identified to be a major allergen, but a second study (PubMed:15940136) reported a very low prevalence.</text>
</comment>
<keyword id="KW-0020">Allergen</keyword>
<proteinExistence type="evidence at protein level"/>
<name>ALTA2_ALTAL</name>